<dbReference type="SMR" id="P0CZ06"/>
<dbReference type="Proteomes" id="UP000019116">
    <property type="component" value="Unplaced"/>
</dbReference>
<dbReference type="ExpressionAtlas" id="P0CZ06">
    <property type="expression patterns" value="baseline and differential"/>
</dbReference>
<dbReference type="GO" id="GO:0045735">
    <property type="term" value="F:nutrient reservoir activity"/>
    <property type="evidence" value="ECO:0007669"/>
    <property type="project" value="UniProtKB-KW"/>
</dbReference>
<dbReference type="CDD" id="cd00261">
    <property type="entry name" value="AAI_SS"/>
    <property type="match status" value="2"/>
</dbReference>
<dbReference type="Gene3D" id="1.10.110.10">
    <property type="entry name" value="Plant lipid-transfer and hydrophobic proteins"/>
    <property type="match status" value="2"/>
</dbReference>
<dbReference type="InterPro" id="IPR036312">
    <property type="entry name" value="Bifun_inhib/LTP/seed_sf"/>
</dbReference>
<dbReference type="InterPro" id="IPR016140">
    <property type="entry name" value="Bifunc_inhib/LTP/seed_store"/>
</dbReference>
<dbReference type="InterPro" id="IPR001954">
    <property type="entry name" value="Glia_glutenin"/>
</dbReference>
<dbReference type="PANTHER" id="PTHR33454:SF11">
    <property type="entry name" value="AVENIN-LIKE B5"/>
    <property type="match status" value="1"/>
</dbReference>
<dbReference type="PANTHER" id="PTHR33454">
    <property type="entry name" value="PROLAMIN PPROL 14P"/>
    <property type="match status" value="1"/>
</dbReference>
<dbReference type="Pfam" id="PF13016">
    <property type="entry name" value="Gliadin"/>
    <property type="match status" value="2"/>
</dbReference>
<dbReference type="PRINTS" id="PR00208">
    <property type="entry name" value="GLIADGLUTEN"/>
</dbReference>
<dbReference type="PRINTS" id="PR00209">
    <property type="entry name" value="GLIADIN"/>
</dbReference>
<dbReference type="SMART" id="SM00499">
    <property type="entry name" value="AAI"/>
    <property type="match status" value="2"/>
</dbReference>
<dbReference type="SUPFAM" id="SSF47699">
    <property type="entry name" value="Bifunctional inhibitor/lipid-transfer protein/seed storage 2S albumin"/>
    <property type="match status" value="2"/>
</dbReference>
<reference key="1">
    <citation type="journal article" date="2006" name="J. Cereal Sci.">
        <title>Transcriptome analysis reveals differentially expressed storage protein transcripts in seeds of Aegilops and wheat.</title>
        <authorList>
            <person name="Kan Y."/>
            <person name="Wan Y."/>
            <person name="Beaudoin F."/>
            <person name="Leader D.J."/>
            <person name="Edwards K."/>
            <person name="Poole R."/>
            <person name="Wang D."/>
            <person name="Mitchell R.A.C."/>
            <person name="Shewry P.R."/>
        </authorList>
    </citation>
    <scope>NUCLEOTIDE SEQUENCE [MRNA]</scope>
    <source>
        <strain>cv. Cadenza</strain>
    </source>
</reference>
<name>AVLB3_WHEAT</name>
<organism>
    <name type="scientific">Triticum aestivum</name>
    <name type="common">Wheat</name>
    <dbReference type="NCBI Taxonomy" id="4565"/>
    <lineage>
        <taxon>Eukaryota</taxon>
        <taxon>Viridiplantae</taxon>
        <taxon>Streptophyta</taxon>
        <taxon>Embryophyta</taxon>
        <taxon>Tracheophyta</taxon>
        <taxon>Spermatophyta</taxon>
        <taxon>Magnoliopsida</taxon>
        <taxon>Liliopsida</taxon>
        <taxon>Poales</taxon>
        <taxon>Poaceae</taxon>
        <taxon>BOP clade</taxon>
        <taxon>Pooideae</taxon>
        <taxon>Triticodae</taxon>
        <taxon>Triticeae</taxon>
        <taxon>Triticinae</taxon>
        <taxon>Triticum</taxon>
    </lineage>
</organism>
<feature type="signal peptide" evidence="2">
    <location>
        <begin position="1"/>
        <end position="18"/>
    </location>
</feature>
<feature type="chain" id="PRO_0000410684" description="Avenin-like b3">
    <location>
        <begin position="19"/>
        <end position="284"/>
    </location>
</feature>
<accession>P0CZ06</accession>
<sequence>MKVFILALLALTATTAIAQLETTCSQGFGQSQQQQQPGQRQLLEQMKPCVAFLQQKCSPLRMPFLQTQVEQLSSCQIVQYQCCQQLAQIPERTRCHAIHIVVEAIIQQQSQQQWQEPQQQAQHKSMRMLLENLSLMCNIYVPVQCQQQQQLGQQQQQQLQEQLTPCTTFLQQQCSPVTVPFPQIPVDQPTSCQNVQHQCCRQLSQIPEQFRCQAIHNVAEAIRQQQPQQQWQGMYQPQQPAQLESIRMSLQALRSMCNIYIPVQCPAPTTYNIPLVATYTGGAC</sequence>
<evidence type="ECO:0000250" key="1"/>
<evidence type="ECO:0000255" key="2"/>
<evidence type="ECO:0000305" key="3"/>
<protein>
    <recommendedName>
        <fullName>Avenin-like b3</fullName>
    </recommendedName>
</protein>
<comment type="function">
    <text evidence="1">Seed storage protein. Might be integrated via inter-chain disulfide bonds within the glutenin polymer (By similarity).</text>
</comment>
<comment type="PTM">
    <text evidence="3">Contains disulfide bonds.</text>
</comment>
<comment type="similarity">
    <text evidence="3">Belongs to the prolamin family.</text>
</comment>
<keyword id="KW-1015">Disulfide bond</keyword>
<keyword id="KW-1185">Reference proteome</keyword>
<keyword id="KW-0708">Seed storage protein</keyword>
<keyword id="KW-0732">Signal</keyword>
<keyword id="KW-0758">Storage protein</keyword>
<proteinExistence type="evidence at transcript level"/>